<keyword id="KW-0046">Antibiotic resistance</keyword>
<keyword id="KW-1003">Cell membrane</keyword>
<keyword id="KW-0133">Cell shape</keyword>
<keyword id="KW-0961">Cell wall biogenesis/degradation</keyword>
<keyword id="KW-0378">Hydrolase</keyword>
<keyword id="KW-0472">Membrane</keyword>
<keyword id="KW-0573">Peptidoglycan synthesis</keyword>
<keyword id="KW-1185">Reference proteome</keyword>
<keyword id="KW-0812">Transmembrane</keyword>
<keyword id="KW-1133">Transmembrane helix</keyword>
<gene>
    <name evidence="1" type="primary">uppP</name>
    <name type="synonym">bacA</name>
    <name type="synonym">upk</name>
    <name type="ordered locus">SAG0138</name>
</gene>
<name>UPPP_STRA5</name>
<sequence>MLIIELLKALFLGVVEGVTEWLPVSSTGHLILVQEFMKLNQSKSFVEMFNIVIQLGAIMAVIVIYFKRLNPFQPGKSAREIRLTWQLWLKVVIACIPSILIALPFDNWFEAHFNFMIPIAIALIFYGFVFIWVEKRNAHLKPQVTELASMSYKTAFLIGCFQVLSIVPGTSRSGATILGAIIIGTSRSVAADFTFFLAIPTMFGYSGLKAVKYFLDGNVLSLDQSLILLVASLTAFVVSLYVIRFLTDYVKRHDFTIFGKYRIVLGSLLILYWLVVHLF</sequence>
<comment type="function">
    <text evidence="1">Catalyzes the dephosphorylation of undecaprenyl diphosphate (UPP). Confers resistance to bacitracin.</text>
</comment>
<comment type="catalytic activity">
    <reaction evidence="1">
        <text>di-trans,octa-cis-undecaprenyl diphosphate + H2O = di-trans,octa-cis-undecaprenyl phosphate + phosphate + H(+)</text>
        <dbReference type="Rhea" id="RHEA:28094"/>
        <dbReference type="ChEBI" id="CHEBI:15377"/>
        <dbReference type="ChEBI" id="CHEBI:15378"/>
        <dbReference type="ChEBI" id="CHEBI:43474"/>
        <dbReference type="ChEBI" id="CHEBI:58405"/>
        <dbReference type="ChEBI" id="CHEBI:60392"/>
        <dbReference type="EC" id="3.6.1.27"/>
    </reaction>
</comment>
<comment type="subcellular location">
    <subcellularLocation>
        <location evidence="1">Cell membrane</location>
        <topology evidence="1">Multi-pass membrane protein</topology>
    </subcellularLocation>
</comment>
<comment type="miscellaneous">
    <text>Bacitracin is thought to be involved in the inhibition of peptidoglycan synthesis by sequestering undecaprenyl diphosphate, thereby reducing the pool of lipid carrier available.</text>
</comment>
<comment type="similarity">
    <text evidence="1">Belongs to the UppP family.</text>
</comment>
<dbReference type="EC" id="3.6.1.27" evidence="1"/>
<dbReference type="EMBL" id="AE009948">
    <property type="protein sequence ID" value="AAM99046.1"/>
    <property type="molecule type" value="Genomic_DNA"/>
</dbReference>
<dbReference type="RefSeq" id="NP_687174.1">
    <property type="nucleotide sequence ID" value="NC_004116.1"/>
</dbReference>
<dbReference type="RefSeq" id="WP_000905327.1">
    <property type="nucleotide sequence ID" value="NC_004116.1"/>
</dbReference>
<dbReference type="SMR" id="Q8E260"/>
<dbReference type="STRING" id="208435.SAG0138"/>
<dbReference type="KEGG" id="sag:SAG0138"/>
<dbReference type="PATRIC" id="fig|208435.3.peg.136"/>
<dbReference type="HOGENOM" id="CLU_060296_2_0_9"/>
<dbReference type="OrthoDB" id="9808289at2"/>
<dbReference type="Proteomes" id="UP000000821">
    <property type="component" value="Chromosome"/>
</dbReference>
<dbReference type="GO" id="GO:0005886">
    <property type="term" value="C:plasma membrane"/>
    <property type="evidence" value="ECO:0007669"/>
    <property type="project" value="UniProtKB-SubCell"/>
</dbReference>
<dbReference type="GO" id="GO:0050380">
    <property type="term" value="F:undecaprenyl-diphosphatase activity"/>
    <property type="evidence" value="ECO:0007669"/>
    <property type="project" value="UniProtKB-UniRule"/>
</dbReference>
<dbReference type="GO" id="GO:0071555">
    <property type="term" value="P:cell wall organization"/>
    <property type="evidence" value="ECO:0007669"/>
    <property type="project" value="UniProtKB-KW"/>
</dbReference>
<dbReference type="GO" id="GO:0009252">
    <property type="term" value="P:peptidoglycan biosynthetic process"/>
    <property type="evidence" value="ECO:0007669"/>
    <property type="project" value="UniProtKB-KW"/>
</dbReference>
<dbReference type="GO" id="GO:0008360">
    <property type="term" value="P:regulation of cell shape"/>
    <property type="evidence" value="ECO:0007669"/>
    <property type="project" value="UniProtKB-KW"/>
</dbReference>
<dbReference type="GO" id="GO:0046677">
    <property type="term" value="P:response to antibiotic"/>
    <property type="evidence" value="ECO:0007669"/>
    <property type="project" value="UniProtKB-UniRule"/>
</dbReference>
<dbReference type="HAMAP" id="MF_01006">
    <property type="entry name" value="Undec_diphosphatase"/>
    <property type="match status" value="1"/>
</dbReference>
<dbReference type="InterPro" id="IPR003824">
    <property type="entry name" value="UppP"/>
</dbReference>
<dbReference type="NCBIfam" id="NF001391">
    <property type="entry name" value="PRK00281.1-5"/>
    <property type="match status" value="1"/>
</dbReference>
<dbReference type="PANTHER" id="PTHR30622">
    <property type="entry name" value="UNDECAPRENYL-DIPHOSPHATASE"/>
    <property type="match status" value="1"/>
</dbReference>
<dbReference type="PANTHER" id="PTHR30622:SF3">
    <property type="entry name" value="UNDECAPRENYL-DIPHOSPHATASE"/>
    <property type="match status" value="1"/>
</dbReference>
<dbReference type="Pfam" id="PF02673">
    <property type="entry name" value="BacA"/>
    <property type="match status" value="1"/>
</dbReference>
<accession>Q8E260</accession>
<evidence type="ECO:0000255" key="1">
    <source>
        <dbReference type="HAMAP-Rule" id="MF_01006"/>
    </source>
</evidence>
<feature type="chain" id="PRO_0000151208" description="Undecaprenyl-diphosphatase">
    <location>
        <begin position="1"/>
        <end position="279"/>
    </location>
</feature>
<feature type="transmembrane region" description="Helical" evidence="1">
    <location>
        <begin position="45"/>
        <end position="65"/>
    </location>
</feature>
<feature type="transmembrane region" description="Helical" evidence="1">
    <location>
        <begin position="85"/>
        <end position="105"/>
    </location>
</feature>
<feature type="transmembrane region" description="Helical" evidence="1">
    <location>
        <begin position="113"/>
        <end position="133"/>
    </location>
</feature>
<feature type="transmembrane region" description="Helical" evidence="1">
    <location>
        <begin position="188"/>
        <end position="208"/>
    </location>
</feature>
<feature type="transmembrane region" description="Helical" evidence="1">
    <location>
        <begin position="226"/>
        <end position="246"/>
    </location>
</feature>
<feature type="transmembrane region" description="Helical" evidence="1">
    <location>
        <begin position="255"/>
        <end position="275"/>
    </location>
</feature>
<protein>
    <recommendedName>
        <fullName evidence="1">Undecaprenyl-diphosphatase</fullName>
        <ecNumber evidence="1">3.6.1.27</ecNumber>
    </recommendedName>
    <alternativeName>
        <fullName evidence="1">Bacitracin resistance protein</fullName>
    </alternativeName>
    <alternativeName>
        <fullName evidence="1">Undecaprenyl pyrophosphate phosphatase</fullName>
    </alternativeName>
</protein>
<reference key="1">
    <citation type="journal article" date="2002" name="Proc. Natl. Acad. Sci. U.S.A.">
        <title>Complete genome sequence and comparative genomic analysis of an emerging human pathogen, serotype V Streptococcus agalactiae.</title>
        <authorList>
            <person name="Tettelin H."/>
            <person name="Masignani V."/>
            <person name="Cieslewicz M.J."/>
            <person name="Eisen J.A."/>
            <person name="Peterson S.N."/>
            <person name="Wessels M.R."/>
            <person name="Paulsen I.T."/>
            <person name="Nelson K.E."/>
            <person name="Margarit I."/>
            <person name="Read T.D."/>
            <person name="Madoff L.C."/>
            <person name="Wolf A.M."/>
            <person name="Beanan M.J."/>
            <person name="Brinkac L.M."/>
            <person name="Daugherty S.C."/>
            <person name="DeBoy R.T."/>
            <person name="Durkin A.S."/>
            <person name="Kolonay J.F."/>
            <person name="Madupu R."/>
            <person name="Lewis M.R."/>
            <person name="Radune D."/>
            <person name="Fedorova N.B."/>
            <person name="Scanlan D."/>
            <person name="Khouri H.M."/>
            <person name="Mulligan S."/>
            <person name="Carty H.A."/>
            <person name="Cline R.T."/>
            <person name="Van Aken S.E."/>
            <person name="Gill J."/>
            <person name="Scarselli M."/>
            <person name="Mora M."/>
            <person name="Iacobini E.T."/>
            <person name="Brettoni C."/>
            <person name="Galli G."/>
            <person name="Mariani M."/>
            <person name="Vegni F."/>
            <person name="Maione D."/>
            <person name="Rinaudo D."/>
            <person name="Rappuoli R."/>
            <person name="Telford J.L."/>
            <person name="Kasper D.L."/>
            <person name="Grandi G."/>
            <person name="Fraser C.M."/>
        </authorList>
    </citation>
    <scope>NUCLEOTIDE SEQUENCE [LARGE SCALE GENOMIC DNA]</scope>
    <source>
        <strain>ATCC BAA-611 / 2603 V/R</strain>
    </source>
</reference>
<organism>
    <name type="scientific">Streptococcus agalactiae serotype V (strain ATCC BAA-611 / 2603 V/R)</name>
    <dbReference type="NCBI Taxonomy" id="208435"/>
    <lineage>
        <taxon>Bacteria</taxon>
        <taxon>Bacillati</taxon>
        <taxon>Bacillota</taxon>
        <taxon>Bacilli</taxon>
        <taxon>Lactobacillales</taxon>
        <taxon>Streptococcaceae</taxon>
        <taxon>Streptococcus</taxon>
    </lineage>
</organism>
<proteinExistence type="inferred from homology"/>